<reference key="1">
    <citation type="journal article" date="2008" name="Appl. Environ. Microbiol.">
        <title>The genome of Polaromonas sp. strain JS666: insights into the evolution of a hydrocarbon- and xenobiotic-degrading bacterium, and features of relevance to biotechnology.</title>
        <authorList>
            <person name="Mattes T.E."/>
            <person name="Alexander A.K."/>
            <person name="Richardson P.M."/>
            <person name="Munk A.C."/>
            <person name="Han C.S."/>
            <person name="Stothard P."/>
            <person name="Coleman N.V."/>
        </authorList>
    </citation>
    <scope>NUCLEOTIDE SEQUENCE [LARGE SCALE GENOMIC DNA]</scope>
    <source>
        <strain>JS666 / ATCC BAA-500</strain>
    </source>
</reference>
<proteinExistence type="inferred from homology"/>
<accession>Q125Q0</accession>
<organism>
    <name type="scientific">Polaromonas sp. (strain JS666 / ATCC BAA-500)</name>
    <dbReference type="NCBI Taxonomy" id="296591"/>
    <lineage>
        <taxon>Bacteria</taxon>
        <taxon>Pseudomonadati</taxon>
        <taxon>Pseudomonadota</taxon>
        <taxon>Betaproteobacteria</taxon>
        <taxon>Burkholderiales</taxon>
        <taxon>Comamonadaceae</taxon>
        <taxon>Polaromonas</taxon>
    </lineage>
</organism>
<name>Y3844_POLSJ</name>
<feature type="chain" id="PRO_0000309399" description="UPF0502 protein Bpro_3844">
    <location>
        <begin position="1"/>
        <end position="236"/>
    </location>
</feature>
<gene>
    <name type="ordered locus">Bpro_3844</name>
</gene>
<protein>
    <recommendedName>
        <fullName evidence="1">UPF0502 protein Bpro_3844</fullName>
    </recommendedName>
</protein>
<dbReference type="EMBL" id="CP000316">
    <property type="protein sequence ID" value="ABE45742.1"/>
    <property type="molecule type" value="Genomic_DNA"/>
</dbReference>
<dbReference type="RefSeq" id="WP_011484732.1">
    <property type="nucleotide sequence ID" value="NC_007948.1"/>
</dbReference>
<dbReference type="SMR" id="Q125Q0"/>
<dbReference type="STRING" id="296591.Bpro_3844"/>
<dbReference type="KEGG" id="pol:Bpro_3844"/>
<dbReference type="eggNOG" id="COG3132">
    <property type="taxonomic scope" value="Bacteria"/>
</dbReference>
<dbReference type="HOGENOM" id="CLU_057831_0_0_4"/>
<dbReference type="OrthoDB" id="9784785at2"/>
<dbReference type="Proteomes" id="UP000001983">
    <property type="component" value="Chromosome"/>
</dbReference>
<dbReference type="Gene3D" id="1.10.10.10">
    <property type="entry name" value="Winged helix-like DNA-binding domain superfamily/Winged helix DNA-binding domain"/>
    <property type="match status" value="2"/>
</dbReference>
<dbReference type="HAMAP" id="MF_01584">
    <property type="entry name" value="UPF0502"/>
    <property type="match status" value="1"/>
</dbReference>
<dbReference type="InterPro" id="IPR007432">
    <property type="entry name" value="DUF480"/>
</dbReference>
<dbReference type="InterPro" id="IPR036388">
    <property type="entry name" value="WH-like_DNA-bd_sf"/>
</dbReference>
<dbReference type="InterPro" id="IPR036390">
    <property type="entry name" value="WH_DNA-bd_sf"/>
</dbReference>
<dbReference type="PANTHER" id="PTHR38768">
    <property type="entry name" value="UPF0502 PROTEIN YCEH"/>
    <property type="match status" value="1"/>
</dbReference>
<dbReference type="PANTHER" id="PTHR38768:SF1">
    <property type="entry name" value="UPF0502 PROTEIN YCEH"/>
    <property type="match status" value="1"/>
</dbReference>
<dbReference type="Pfam" id="PF04337">
    <property type="entry name" value="DUF480"/>
    <property type="match status" value="1"/>
</dbReference>
<dbReference type="SUPFAM" id="SSF46785">
    <property type="entry name" value="Winged helix' DNA-binding domain"/>
    <property type="match status" value="2"/>
</dbReference>
<sequence length="236" mass="25700">MTIRTLTPIEARVLGTLMEKARTVPDSYPLSLNALVSGCNQKTSRDPLMEVNDDEARAAIDSLKAQSLVFEGSSSRVPRFEHNFQRAAGVNEPQAMVMGLLMLRGPQTAAELRTNGERWYRFADSAAVEAVLLELQQRGEDGGQATVQKLPRAAGAREQRWVHLLCGEPDIQALMASAPTTAEAEGLLARVTALENTLARLKADNAQLRSHVLNISEQLGIALPETLDDAHDHSPN</sequence>
<evidence type="ECO:0000255" key="1">
    <source>
        <dbReference type="HAMAP-Rule" id="MF_01584"/>
    </source>
</evidence>
<comment type="similarity">
    <text evidence="1">Belongs to the UPF0502 family.</text>
</comment>
<keyword id="KW-1185">Reference proteome</keyword>